<name>RRF_RHILW</name>
<protein>
    <recommendedName>
        <fullName evidence="1">Ribosome-recycling factor</fullName>
        <shortName evidence="1">RRF</shortName>
    </recommendedName>
    <alternativeName>
        <fullName evidence="1">Ribosome-releasing factor</fullName>
    </alternativeName>
</protein>
<dbReference type="EMBL" id="CP001191">
    <property type="protein sequence ID" value="ACI54876.1"/>
    <property type="molecule type" value="Genomic_DNA"/>
</dbReference>
<dbReference type="RefSeq" id="WP_012557550.1">
    <property type="nucleotide sequence ID" value="NC_011369.1"/>
</dbReference>
<dbReference type="SMR" id="B5ZN86"/>
<dbReference type="STRING" id="395492.Rleg2_1586"/>
<dbReference type="KEGG" id="rlt:Rleg2_1586"/>
<dbReference type="eggNOG" id="COG0233">
    <property type="taxonomic scope" value="Bacteria"/>
</dbReference>
<dbReference type="HOGENOM" id="CLU_073981_2_0_5"/>
<dbReference type="Proteomes" id="UP000008330">
    <property type="component" value="Chromosome"/>
</dbReference>
<dbReference type="GO" id="GO:0005829">
    <property type="term" value="C:cytosol"/>
    <property type="evidence" value="ECO:0007669"/>
    <property type="project" value="GOC"/>
</dbReference>
<dbReference type="GO" id="GO:0043023">
    <property type="term" value="F:ribosomal large subunit binding"/>
    <property type="evidence" value="ECO:0007669"/>
    <property type="project" value="TreeGrafter"/>
</dbReference>
<dbReference type="GO" id="GO:0002184">
    <property type="term" value="P:cytoplasmic translational termination"/>
    <property type="evidence" value="ECO:0007669"/>
    <property type="project" value="TreeGrafter"/>
</dbReference>
<dbReference type="CDD" id="cd00520">
    <property type="entry name" value="RRF"/>
    <property type="match status" value="1"/>
</dbReference>
<dbReference type="FunFam" id="1.10.132.20:FF:000001">
    <property type="entry name" value="Ribosome-recycling factor"/>
    <property type="match status" value="1"/>
</dbReference>
<dbReference type="FunFam" id="3.30.1360.40:FF:000001">
    <property type="entry name" value="Ribosome-recycling factor"/>
    <property type="match status" value="1"/>
</dbReference>
<dbReference type="Gene3D" id="3.30.1360.40">
    <property type="match status" value="1"/>
</dbReference>
<dbReference type="Gene3D" id="1.10.132.20">
    <property type="entry name" value="Ribosome-recycling factor"/>
    <property type="match status" value="1"/>
</dbReference>
<dbReference type="HAMAP" id="MF_00040">
    <property type="entry name" value="RRF"/>
    <property type="match status" value="1"/>
</dbReference>
<dbReference type="InterPro" id="IPR002661">
    <property type="entry name" value="Ribosome_recyc_fac"/>
</dbReference>
<dbReference type="InterPro" id="IPR023584">
    <property type="entry name" value="Ribosome_recyc_fac_dom"/>
</dbReference>
<dbReference type="InterPro" id="IPR036191">
    <property type="entry name" value="RRF_sf"/>
</dbReference>
<dbReference type="NCBIfam" id="TIGR00496">
    <property type="entry name" value="frr"/>
    <property type="match status" value="1"/>
</dbReference>
<dbReference type="PANTHER" id="PTHR20982:SF3">
    <property type="entry name" value="MITOCHONDRIAL RIBOSOME RECYCLING FACTOR PSEUDO 1"/>
    <property type="match status" value="1"/>
</dbReference>
<dbReference type="PANTHER" id="PTHR20982">
    <property type="entry name" value="RIBOSOME RECYCLING FACTOR"/>
    <property type="match status" value="1"/>
</dbReference>
<dbReference type="Pfam" id="PF01765">
    <property type="entry name" value="RRF"/>
    <property type="match status" value="1"/>
</dbReference>
<dbReference type="SUPFAM" id="SSF55194">
    <property type="entry name" value="Ribosome recycling factor, RRF"/>
    <property type="match status" value="1"/>
</dbReference>
<feature type="chain" id="PRO_1000090775" description="Ribosome-recycling factor">
    <location>
        <begin position="1"/>
        <end position="186"/>
    </location>
</feature>
<accession>B5ZN86</accession>
<reference key="1">
    <citation type="journal article" date="2010" name="Stand. Genomic Sci.">
        <title>Complete genome sequence of Rhizobium leguminosarum bv trifolii strain WSM2304, an effective microsymbiont of the South American clover Trifolium polymorphum.</title>
        <authorList>
            <person name="Reeve W."/>
            <person name="O'Hara G."/>
            <person name="Chain P."/>
            <person name="Ardley J."/>
            <person name="Brau L."/>
            <person name="Nandesena K."/>
            <person name="Tiwari R."/>
            <person name="Malfatti S."/>
            <person name="Kiss H."/>
            <person name="Lapidus A."/>
            <person name="Copeland A."/>
            <person name="Nolan M."/>
            <person name="Land M."/>
            <person name="Ivanova N."/>
            <person name="Mavromatis K."/>
            <person name="Markowitz V."/>
            <person name="Kyrpides N."/>
            <person name="Melino V."/>
            <person name="Denton M."/>
            <person name="Yates R."/>
            <person name="Howieson J."/>
        </authorList>
    </citation>
    <scope>NUCLEOTIDE SEQUENCE [LARGE SCALE GENOMIC DNA]</scope>
    <source>
        <strain>WSM2304</strain>
    </source>
</reference>
<proteinExistence type="inferred from homology"/>
<evidence type="ECO:0000255" key="1">
    <source>
        <dbReference type="HAMAP-Rule" id="MF_00040"/>
    </source>
</evidence>
<keyword id="KW-0963">Cytoplasm</keyword>
<keyword id="KW-0648">Protein biosynthesis</keyword>
<keyword id="KW-1185">Reference proteome</keyword>
<sequence length="186" mass="20738">MTEGIDIKELKRRMDGAVSAFKSDIASLRTGRASANILDPVTIEAYGSRMPLNQVANITVPEPRMLSVSVWDKSMVSAVERGIRESNLGLNPIVDGQSLRIPLPELNEERRKSLVKVAHDYAEKSKVAIRHVRRDGMDGLKKAEKDGVIGQDEGRAQSERVQKMTDETISEIDRLLGEKEKEIMQV</sequence>
<gene>
    <name evidence="1" type="primary">frr</name>
    <name type="ordered locus">Rleg2_1586</name>
</gene>
<comment type="function">
    <text evidence="1">Responsible for the release of ribosomes from messenger RNA at the termination of protein biosynthesis. May increase the efficiency of translation by recycling ribosomes from one round of translation to another.</text>
</comment>
<comment type="subcellular location">
    <subcellularLocation>
        <location evidence="1">Cytoplasm</location>
    </subcellularLocation>
</comment>
<comment type="similarity">
    <text evidence="1">Belongs to the RRF family.</text>
</comment>
<organism>
    <name type="scientific">Rhizobium leguminosarum bv. trifolii (strain WSM2304)</name>
    <dbReference type="NCBI Taxonomy" id="395492"/>
    <lineage>
        <taxon>Bacteria</taxon>
        <taxon>Pseudomonadati</taxon>
        <taxon>Pseudomonadota</taxon>
        <taxon>Alphaproteobacteria</taxon>
        <taxon>Hyphomicrobiales</taxon>
        <taxon>Rhizobiaceae</taxon>
        <taxon>Rhizobium/Agrobacterium group</taxon>
        <taxon>Rhizobium</taxon>
    </lineage>
</organism>